<gene>
    <name evidence="1" type="primary">cdh</name>
    <name type="ordered locus">EcolC_4100</name>
</gene>
<proteinExistence type="inferred from homology"/>
<feature type="chain" id="PRO_1000079160" description="CDP-diacylglycerol pyrophosphatase">
    <location>
        <begin position="1"/>
        <end position="251"/>
    </location>
</feature>
<feature type="transmembrane region" description="Helical" evidence="1">
    <location>
        <begin position="4"/>
        <end position="24"/>
    </location>
</feature>
<accession>B1IVG1</accession>
<sequence length="251" mass="28365">MKKAGLLFLVMIVIAVVAAGIGYWKLTGEESDTLRKIVLEECLPNQQQNQNPSPCAEVKPNAGYVVLKDLNGPLQYLLMPTYRINGTESPLLTDPSTPNFFWLAWQARDFMSKKYGQPVPDRAVSLAINSRTGRTQNHFHIHISCIRPDVREQLDNNLANISSRWLPLPGGLRGHEYLARRVTESELVQRSPFIMLAEEVPEAREHMGSYGLAMVRQSDNSFVLLATQRNLLTLNRASAEEIQDHQCEILR</sequence>
<comment type="catalytic activity">
    <reaction evidence="1">
        <text>a CDP-1,2-diacyl-sn-glycerol + H2O = a 1,2-diacyl-sn-glycero-3-phosphate + CMP + 2 H(+)</text>
        <dbReference type="Rhea" id="RHEA:15221"/>
        <dbReference type="ChEBI" id="CHEBI:15377"/>
        <dbReference type="ChEBI" id="CHEBI:15378"/>
        <dbReference type="ChEBI" id="CHEBI:58332"/>
        <dbReference type="ChEBI" id="CHEBI:58608"/>
        <dbReference type="ChEBI" id="CHEBI:60377"/>
        <dbReference type="EC" id="3.6.1.26"/>
    </reaction>
</comment>
<comment type="pathway">
    <text evidence="1">Phospholipid metabolism; CDP-diacylglycerol degradation; phosphatidate from CDP-diacylglycerol: step 1/1.</text>
</comment>
<comment type="subcellular location">
    <subcellularLocation>
        <location evidence="1">Cell inner membrane</location>
        <topology evidence="1">Single-pass membrane protein</topology>
    </subcellularLocation>
</comment>
<comment type="similarity">
    <text evidence="1">Belongs to the Cdh family.</text>
</comment>
<protein>
    <recommendedName>
        <fullName evidence="1">CDP-diacylglycerol pyrophosphatase</fullName>
        <ecNumber evidence="1">3.6.1.26</ecNumber>
    </recommendedName>
    <alternativeName>
        <fullName evidence="1">CDP-diacylglycerol phosphatidylhydrolase</fullName>
    </alternativeName>
    <alternativeName>
        <fullName evidence="1">CDP-diglyceride hydrolase</fullName>
    </alternativeName>
</protein>
<keyword id="KW-0997">Cell inner membrane</keyword>
<keyword id="KW-1003">Cell membrane</keyword>
<keyword id="KW-0378">Hydrolase</keyword>
<keyword id="KW-0444">Lipid biosynthesis</keyword>
<keyword id="KW-0443">Lipid metabolism</keyword>
<keyword id="KW-0472">Membrane</keyword>
<keyword id="KW-0594">Phospholipid biosynthesis</keyword>
<keyword id="KW-1208">Phospholipid metabolism</keyword>
<keyword id="KW-0812">Transmembrane</keyword>
<keyword id="KW-1133">Transmembrane helix</keyword>
<evidence type="ECO:0000255" key="1">
    <source>
        <dbReference type="HAMAP-Rule" id="MF_00319"/>
    </source>
</evidence>
<organism>
    <name type="scientific">Escherichia coli (strain ATCC 8739 / DSM 1576 / NBRC 3972 / NCIMB 8545 / WDCM 00012 / Crooks)</name>
    <dbReference type="NCBI Taxonomy" id="481805"/>
    <lineage>
        <taxon>Bacteria</taxon>
        <taxon>Pseudomonadati</taxon>
        <taxon>Pseudomonadota</taxon>
        <taxon>Gammaproteobacteria</taxon>
        <taxon>Enterobacterales</taxon>
        <taxon>Enterobacteriaceae</taxon>
        <taxon>Escherichia</taxon>
    </lineage>
</organism>
<name>CDH_ECOLC</name>
<reference key="1">
    <citation type="submission" date="2008-02" db="EMBL/GenBank/DDBJ databases">
        <title>Complete sequence of Escherichia coli C str. ATCC 8739.</title>
        <authorList>
            <person name="Copeland A."/>
            <person name="Lucas S."/>
            <person name="Lapidus A."/>
            <person name="Glavina del Rio T."/>
            <person name="Dalin E."/>
            <person name="Tice H."/>
            <person name="Bruce D."/>
            <person name="Goodwin L."/>
            <person name="Pitluck S."/>
            <person name="Kiss H."/>
            <person name="Brettin T."/>
            <person name="Detter J.C."/>
            <person name="Han C."/>
            <person name="Kuske C.R."/>
            <person name="Schmutz J."/>
            <person name="Larimer F."/>
            <person name="Land M."/>
            <person name="Hauser L."/>
            <person name="Kyrpides N."/>
            <person name="Mikhailova N."/>
            <person name="Ingram L."/>
            <person name="Richardson P."/>
        </authorList>
    </citation>
    <scope>NUCLEOTIDE SEQUENCE [LARGE SCALE GENOMIC DNA]</scope>
    <source>
        <strain>ATCC 8739 / DSM 1576 / NBRC 3972 / NCIMB 8545 / WDCM 00012 / Crooks</strain>
    </source>
</reference>
<dbReference type="EC" id="3.6.1.26" evidence="1"/>
<dbReference type="EMBL" id="CP000946">
    <property type="protein sequence ID" value="ACA79698.1"/>
    <property type="molecule type" value="Genomic_DNA"/>
</dbReference>
<dbReference type="RefSeq" id="WP_000708995.1">
    <property type="nucleotide sequence ID" value="NZ_MTFT01000008.1"/>
</dbReference>
<dbReference type="SMR" id="B1IVG1"/>
<dbReference type="KEGG" id="ecl:EcolC_4100"/>
<dbReference type="HOGENOM" id="CLU_077117_0_1_6"/>
<dbReference type="UniPathway" id="UPA00609">
    <property type="reaction ID" value="UER00664"/>
</dbReference>
<dbReference type="GO" id="GO:0005886">
    <property type="term" value="C:plasma membrane"/>
    <property type="evidence" value="ECO:0007669"/>
    <property type="project" value="UniProtKB-SubCell"/>
</dbReference>
<dbReference type="GO" id="GO:0008715">
    <property type="term" value="F:CDP-diacylglycerol diphosphatase activity"/>
    <property type="evidence" value="ECO:0007669"/>
    <property type="project" value="UniProtKB-UniRule"/>
</dbReference>
<dbReference type="GO" id="GO:0046342">
    <property type="term" value="P:CDP-diacylglycerol catabolic process"/>
    <property type="evidence" value="ECO:0007669"/>
    <property type="project" value="UniProtKB-UniRule"/>
</dbReference>
<dbReference type="GO" id="GO:0008654">
    <property type="term" value="P:phospholipid biosynthetic process"/>
    <property type="evidence" value="ECO:0007669"/>
    <property type="project" value="UniProtKB-KW"/>
</dbReference>
<dbReference type="FunFam" id="3.30.428.30:FF:000001">
    <property type="entry name" value="CDP-diacylglycerol pyrophosphatase"/>
    <property type="match status" value="1"/>
</dbReference>
<dbReference type="Gene3D" id="3.30.428.30">
    <property type="entry name" value="HIT family - CDH-like"/>
    <property type="match status" value="1"/>
</dbReference>
<dbReference type="HAMAP" id="MF_00319">
    <property type="entry name" value="Cdh"/>
    <property type="match status" value="1"/>
</dbReference>
<dbReference type="InterPro" id="IPR003763">
    <property type="entry name" value="CDP-diacylglyc_Pase"/>
</dbReference>
<dbReference type="InterPro" id="IPR015993">
    <property type="entry name" value="CDP-diacylglyc_Pase_proteobac"/>
</dbReference>
<dbReference type="InterPro" id="IPR036265">
    <property type="entry name" value="HIT-like_sf"/>
</dbReference>
<dbReference type="NCBIfam" id="TIGR00672">
    <property type="entry name" value="cdh"/>
    <property type="match status" value="1"/>
</dbReference>
<dbReference type="NCBIfam" id="NF003986">
    <property type="entry name" value="PRK05471.1-5"/>
    <property type="match status" value="1"/>
</dbReference>
<dbReference type="NCBIfam" id="NF003987">
    <property type="entry name" value="PRK05471.1-6"/>
    <property type="match status" value="1"/>
</dbReference>
<dbReference type="Pfam" id="PF02611">
    <property type="entry name" value="CDH"/>
    <property type="match status" value="1"/>
</dbReference>
<dbReference type="PIRSF" id="PIRSF001273">
    <property type="entry name" value="CDH"/>
    <property type="match status" value="1"/>
</dbReference>
<dbReference type="SUPFAM" id="SSF54197">
    <property type="entry name" value="HIT-like"/>
    <property type="match status" value="1"/>
</dbReference>